<gene>
    <name type="primary">faf2-a</name>
    <name type="synonym">ubxd8-a</name>
</gene>
<proteinExistence type="evidence at transcript level"/>
<comment type="function">
    <text evidence="1">Plays an important role in endoplasmic reticulum-associated degradation (ERAD) that mediates ubiquitin-dependent degradation of misfolded endoplasmic reticulum proteins. Involved in inhibition of lipid droplet degradation. Involved in stress granule disassembly.</text>
</comment>
<comment type="subcellular location">
    <subcellularLocation>
        <location evidence="1">Cytoplasm</location>
    </subcellularLocation>
    <subcellularLocation>
        <location evidence="1">Lipid droplet</location>
    </subcellularLocation>
    <subcellularLocation>
        <location evidence="1">Endoplasmic reticulum</location>
    </subcellularLocation>
</comment>
<accession>Q6AZH6</accession>
<organism>
    <name type="scientific">Xenopus laevis</name>
    <name type="common">African clawed frog</name>
    <dbReference type="NCBI Taxonomy" id="8355"/>
    <lineage>
        <taxon>Eukaryota</taxon>
        <taxon>Metazoa</taxon>
        <taxon>Chordata</taxon>
        <taxon>Craniata</taxon>
        <taxon>Vertebrata</taxon>
        <taxon>Euteleostomi</taxon>
        <taxon>Amphibia</taxon>
        <taxon>Batrachia</taxon>
        <taxon>Anura</taxon>
        <taxon>Pipoidea</taxon>
        <taxon>Pipidae</taxon>
        <taxon>Xenopodinae</taxon>
        <taxon>Xenopus</taxon>
        <taxon>Xenopus</taxon>
    </lineage>
</organism>
<feature type="chain" id="PRO_0000244067" description="FAS-associated factor 2-A">
    <location>
        <begin position="1"/>
        <end position="445"/>
    </location>
</feature>
<feature type="domain" description="UBA">
    <location>
        <begin position="12"/>
        <end position="53"/>
    </location>
</feature>
<feature type="domain" description="UBX" evidence="3">
    <location>
        <begin position="357"/>
        <end position="439"/>
    </location>
</feature>
<feature type="region of interest" description="Disordered" evidence="4">
    <location>
        <begin position="302"/>
        <end position="354"/>
    </location>
</feature>
<feature type="coiled-coil region" evidence="2">
    <location>
        <begin position="275"/>
        <end position="353"/>
    </location>
</feature>
<feature type="compositionally biased region" description="Basic and acidic residues" evidence="4">
    <location>
        <begin position="303"/>
        <end position="348"/>
    </location>
</feature>
<name>FAF2A_XENLA</name>
<protein>
    <recommendedName>
        <fullName>FAS-associated factor 2-A</fullName>
    </recommendedName>
    <alternativeName>
        <fullName>UBX domain-containing protein 8-A</fullName>
    </alternativeName>
</protein>
<reference key="1">
    <citation type="submission" date="2004-07" db="EMBL/GenBank/DDBJ databases">
        <authorList>
            <consortium name="NIH - Xenopus Gene Collection (XGC) project"/>
        </authorList>
    </citation>
    <scope>NUCLEOTIDE SEQUENCE [LARGE SCALE MRNA]</scope>
    <source>
        <tissue>Embryo</tissue>
    </source>
</reference>
<dbReference type="EMBL" id="BC078001">
    <property type="protein sequence ID" value="AAH78001.1"/>
    <property type="molecule type" value="mRNA"/>
</dbReference>
<dbReference type="RefSeq" id="NP_001087113.1">
    <property type="nucleotide sequence ID" value="NM_001093644.1"/>
</dbReference>
<dbReference type="SMR" id="Q6AZH6"/>
<dbReference type="DNASU" id="447002"/>
<dbReference type="GeneID" id="447002"/>
<dbReference type="KEGG" id="xla:447002"/>
<dbReference type="AGR" id="Xenbase:XB-GENE-6254585"/>
<dbReference type="CTD" id="447002"/>
<dbReference type="Xenbase" id="XB-GENE-6254585">
    <property type="gene designation" value="faf2.S"/>
</dbReference>
<dbReference type="OrthoDB" id="1026733at2759"/>
<dbReference type="Proteomes" id="UP000186698">
    <property type="component" value="Chromosome 3S"/>
</dbReference>
<dbReference type="Bgee" id="447002">
    <property type="expression patterns" value="Expressed in neurula embryo and 19 other cell types or tissues"/>
</dbReference>
<dbReference type="GO" id="GO:0005783">
    <property type="term" value="C:endoplasmic reticulum"/>
    <property type="evidence" value="ECO:0000250"/>
    <property type="project" value="UniProtKB"/>
</dbReference>
<dbReference type="GO" id="GO:0005811">
    <property type="term" value="C:lipid droplet"/>
    <property type="evidence" value="ECO:0007669"/>
    <property type="project" value="UniProtKB-SubCell"/>
</dbReference>
<dbReference type="GO" id="GO:0030674">
    <property type="term" value="F:protein-macromolecule adaptor activity"/>
    <property type="evidence" value="ECO:0000250"/>
    <property type="project" value="UniProtKB"/>
</dbReference>
<dbReference type="GO" id="GO:0043130">
    <property type="term" value="F:ubiquitin binding"/>
    <property type="evidence" value="ECO:0000318"/>
    <property type="project" value="GO_Central"/>
</dbReference>
<dbReference type="GO" id="GO:0036503">
    <property type="term" value="P:ERAD pathway"/>
    <property type="evidence" value="ECO:0000318"/>
    <property type="project" value="GO_Central"/>
</dbReference>
<dbReference type="GO" id="GO:0035617">
    <property type="term" value="P:stress granule disassembly"/>
    <property type="evidence" value="ECO:0000250"/>
    <property type="project" value="UniProtKB"/>
</dbReference>
<dbReference type="CDD" id="cd02991">
    <property type="entry name" value="UAS_ETEA"/>
    <property type="match status" value="1"/>
</dbReference>
<dbReference type="CDD" id="cd14414">
    <property type="entry name" value="UBA_FAF2"/>
    <property type="match status" value="1"/>
</dbReference>
<dbReference type="CDD" id="cd16120">
    <property type="entry name" value="UBX_UBXN3B"/>
    <property type="match status" value="1"/>
</dbReference>
<dbReference type="FunFam" id="3.10.20.90:FF:000101">
    <property type="entry name" value="FAS-associated factor 2 isoform X2"/>
    <property type="match status" value="1"/>
</dbReference>
<dbReference type="FunFam" id="3.40.30.10:FF:000066">
    <property type="entry name" value="FAS-associated factor 2 isoform X2"/>
    <property type="match status" value="1"/>
</dbReference>
<dbReference type="Gene3D" id="1.10.8.10">
    <property type="entry name" value="DNA helicase RuvA subunit, C-terminal domain"/>
    <property type="match status" value="1"/>
</dbReference>
<dbReference type="Gene3D" id="3.40.30.10">
    <property type="entry name" value="Glutaredoxin"/>
    <property type="match status" value="1"/>
</dbReference>
<dbReference type="Gene3D" id="3.10.20.90">
    <property type="entry name" value="Phosphatidylinositol 3-kinase Catalytic Subunit, Chain A, domain 1"/>
    <property type="match status" value="1"/>
</dbReference>
<dbReference type="InterPro" id="IPR049483">
    <property type="entry name" value="FAF1_2-like_UAS"/>
</dbReference>
<dbReference type="InterPro" id="IPR036249">
    <property type="entry name" value="Thioredoxin-like_sf"/>
</dbReference>
<dbReference type="InterPro" id="IPR006577">
    <property type="entry name" value="UAS"/>
</dbReference>
<dbReference type="InterPro" id="IPR009060">
    <property type="entry name" value="UBA-like_sf"/>
</dbReference>
<dbReference type="InterPro" id="IPR054109">
    <property type="entry name" value="UBA_8"/>
</dbReference>
<dbReference type="InterPro" id="IPR029071">
    <property type="entry name" value="Ubiquitin-like_domsf"/>
</dbReference>
<dbReference type="InterPro" id="IPR001012">
    <property type="entry name" value="UBX_dom"/>
</dbReference>
<dbReference type="InterPro" id="IPR050730">
    <property type="entry name" value="UBX_domain-protein"/>
</dbReference>
<dbReference type="PANTHER" id="PTHR23322:SF1">
    <property type="entry name" value="FAS-ASSOCIATED FACTOR 2"/>
    <property type="match status" value="1"/>
</dbReference>
<dbReference type="PANTHER" id="PTHR23322">
    <property type="entry name" value="FAS-ASSOCIATED PROTEIN"/>
    <property type="match status" value="1"/>
</dbReference>
<dbReference type="Pfam" id="PF21021">
    <property type="entry name" value="FAF1"/>
    <property type="match status" value="1"/>
</dbReference>
<dbReference type="Pfam" id="PF22566">
    <property type="entry name" value="UBA_8"/>
    <property type="match status" value="1"/>
</dbReference>
<dbReference type="Pfam" id="PF00789">
    <property type="entry name" value="UBX"/>
    <property type="match status" value="1"/>
</dbReference>
<dbReference type="SMART" id="SM00594">
    <property type="entry name" value="UAS"/>
    <property type="match status" value="1"/>
</dbReference>
<dbReference type="SUPFAM" id="SSF52833">
    <property type="entry name" value="Thioredoxin-like"/>
    <property type="match status" value="1"/>
</dbReference>
<dbReference type="SUPFAM" id="SSF46934">
    <property type="entry name" value="UBA-like"/>
    <property type="match status" value="1"/>
</dbReference>
<dbReference type="SUPFAM" id="SSF54236">
    <property type="entry name" value="Ubiquitin-like"/>
    <property type="match status" value="1"/>
</dbReference>
<dbReference type="PROSITE" id="PS50033">
    <property type="entry name" value="UBX"/>
    <property type="match status" value="1"/>
</dbReference>
<evidence type="ECO:0000250" key="1">
    <source>
        <dbReference type="UniProtKB" id="Q96CS3"/>
    </source>
</evidence>
<evidence type="ECO:0000255" key="2"/>
<evidence type="ECO:0000255" key="3">
    <source>
        <dbReference type="PROSITE-ProRule" id="PRU00215"/>
    </source>
</evidence>
<evidence type="ECO:0000256" key="4">
    <source>
        <dbReference type="SAM" id="MobiDB-lite"/>
    </source>
</evidence>
<sequence>MAALEERELSQEQTEKLLQFQDLTGIESMDQCRQTLQQHNWNIEAAVQDRLNEQEGVPRVFNNPPNRPLQVNTADHRVYSYVVSRPQPRGLLGWGYYLIMLPFRITYYTLLDIFRFTLRFIRPDPRSRVTDPVGDVVSFIHLFEEKYGRIHPVFYQGTYSQALNDAKQELRFLLVYLHGEDHQDSDDFCRNTLCTPEVTHFINSRMLFWACSTNKPEGFRVSQALRENTYPFLGMIMLKDRRMTVVGRLEGLMQPQDLINQLTFIIEANQTYLVSERLEREERNETQVLRQQQDEAYLVSLRADQEKERKKKEKQEQKRREEEEAQRKQMLEERKKRNLEEEKERKSECLPAEPVPDHPDNVKIIFKMPNGTRVERRFLFTQSLSVIHDFLFSLKETPEKFQIVTSFPRRVLPCLPSEEIPVPPTLQEAGLSQSQLLFVQDLTDD</sequence>
<keyword id="KW-0175">Coiled coil</keyword>
<keyword id="KW-0963">Cytoplasm</keyword>
<keyword id="KW-0256">Endoplasmic reticulum</keyword>
<keyword id="KW-0551">Lipid droplet</keyword>
<keyword id="KW-1185">Reference proteome</keyword>